<gene>
    <name type="ordered locus">At2g42470</name>
    <name type="ORF">MHK10.19</name>
</gene>
<protein>
    <recommendedName>
        <fullName>MATH domain and coiled-coil domain-containing protein At2g42470</fullName>
    </recommendedName>
    <alternativeName>
        <fullName>RTM3-like protein At2g42470</fullName>
    </alternativeName>
</protein>
<comment type="sequence caution" evidence="3">
    <conflict type="erroneous gene model prediction">
        <sequence resource="EMBL-CDS" id="AAD23728"/>
    </conflict>
    <text>The predicted gene has been split into 2 genes: At2g42465 and At2g42470.</text>
</comment>
<name>MCC08_ARATH</name>
<dbReference type="EMBL" id="AC005956">
    <property type="protein sequence ID" value="AAD23728.1"/>
    <property type="status" value="ALT_SEQ"/>
    <property type="molecule type" value="Genomic_DNA"/>
</dbReference>
<dbReference type="EMBL" id="CP002685">
    <property type="protein sequence ID" value="AEC10124.2"/>
    <property type="molecule type" value="Genomic_DNA"/>
</dbReference>
<dbReference type="PIR" id="C84854">
    <property type="entry name" value="C84854"/>
</dbReference>
<dbReference type="RefSeq" id="NP_181775.2">
    <property type="nucleotide sequence ID" value="NM_129808.2"/>
</dbReference>
<dbReference type="SMR" id="P0DKG5"/>
<dbReference type="FunCoup" id="P0DKG5">
    <property type="interactions" value="13"/>
</dbReference>
<dbReference type="EnsemblPlants" id="AT2G42470.1">
    <property type="protein sequence ID" value="AT2G42470.1"/>
    <property type="gene ID" value="AT2G42470"/>
</dbReference>
<dbReference type="GeneID" id="818847"/>
<dbReference type="Gramene" id="AT2G42470.1">
    <property type="protein sequence ID" value="AT2G42470.1"/>
    <property type="gene ID" value="AT2G42470"/>
</dbReference>
<dbReference type="KEGG" id="ath:AT2G42470"/>
<dbReference type="Araport" id="AT2G42470"/>
<dbReference type="TAIR" id="AT2G42470"/>
<dbReference type="InParanoid" id="P0DKG5"/>
<dbReference type="OMA" id="VSWIFVN"/>
<dbReference type="PRO" id="PR:P0DKG5"/>
<dbReference type="Proteomes" id="UP000006548">
    <property type="component" value="Chromosome 2"/>
</dbReference>
<dbReference type="ExpressionAtlas" id="P0DKG5">
    <property type="expression patterns" value="baseline and differential"/>
</dbReference>
<dbReference type="CDD" id="cd00121">
    <property type="entry name" value="MATH"/>
    <property type="match status" value="1"/>
</dbReference>
<dbReference type="Gene3D" id="2.60.210.10">
    <property type="entry name" value="Apoptosis, Tumor Necrosis Factor Receptor Associated Protein 2, Chain A"/>
    <property type="match status" value="1"/>
</dbReference>
<dbReference type="InterPro" id="IPR050804">
    <property type="entry name" value="MATH-CC_domain_protein"/>
</dbReference>
<dbReference type="InterPro" id="IPR002083">
    <property type="entry name" value="MATH/TRAF_dom"/>
</dbReference>
<dbReference type="InterPro" id="IPR008974">
    <property type="entry name" value="TRAF-like"/>
</dbReference>
<dbReference type="PANTHER" id="PTHR46236:SF12">
    <property type="entry name" value="MATH DOMAIN-CONTAINING PROTEIN"/>
    <property type="match status" value="1"/>
</dbReference>
<dbReference type="PANTHER" id="PTHR46236">
    <property type="entry name" value="TRAF-LIKE SUPERFAMILY PROTEIN"/>
    <property type="match status" value="1"/>
</dbReference>
<dbReference type="Pfam" id="PF00917">
    <property type="entry name" value="MATH"/>
    <property type="match status" value="1"/>
</dbReference>
<dbReference type="SMART" id="SM00061">
    <property type="entry name" value="MATH"/>
    <property type="match status" value="1"/>
</dbReference>
<dbReference type="SUPFAM" id="SSF49599">
    <property type="entry name" value="TRAF domain-like"/>
    <property type="match status" value="1"/>
</dbReference>
<dbReference type="PROSITE" id="PS50144">
    <property type="entry name" value="MATH"/>
    <property type="match status" value="1"/>
</dbReference>
<feature type="chain" id="PRO_0000429285" description="MATH domain and coiled-coil domain-containing protein At2g42470">
    <location>
        <begin position="1"/>
        <end position="304"/>
    </location>
</feature>
<feature type="domain" description="MATH" evidence="2">
    <location>
        <begin position="6"/>
        <end position="123"/>
    </location>
</feature>
<feature type="coiled-coil region" evidence="1">
    <location>
        <begin position="219"/>
        <end position="292"/>
    </location>
</feature>
<keyword id="KW-0175">Coiled coil</keyword>
<keyword id="KW-1185">Reference proteome</keyword>
<reference key="1">
    <citation type="journal article" date="1999" name="Nature">
        <title>Sequence and analysis of chromosome 2 of the plant Arabidopsis thaliana.</title>
        <authorList>
            <person name="Lin X."/>
            <person name="Kaul S."/>
            <person name="Rounsley S.D."/>
            <person name="Shea T.P."/>
            <person name="Benito M.-I."/>
            <person name="Town C.D."/>
            <person name="Fujii C.Y."/>
            <person name="Mason T.M."/>
            <person name="Bowman C.L."/>
            <person name="Barnstead M.E."/>
            <person name="Feldblyum T.V."/>
            <person name="Buell C.R."/>
            <person name="Ketchum K.A."/>
            <person name="Lee J.J."/>
            <person name="Ronning C.M."/>
            <person name="Koo H.L."/>
            <person name="Moffat K.S."/>
            <person name="Cronin L.A."/>
            <person name="Shen M."/>
            <person name="Pai G."/>
            <person name="Van Aken S."/>
            <person name="Umayam L."/>
            <person name="Tallon L.J."/>
            <person name="Gill J.E."/>
            <person name="Adams M.D."/>
            <person name="Carrera A.J."/>
            <person name="Creasy T.H."/>
            <person name="Goodman H.M."/>
            <person name="Somerville C.R."/>
            <person name="Copenhaver G.P."/>
            <person name="Preuss D."/>
            <person name="Nierman W.C."/>
            <person name="White O."/>
            <person name="Eisen J.A."/>
            <person name="Salzberg S.L."/>
            <person name="Fraser C.M."/>
            <person name="Venter J.C."/>
        </authorList>
    </citation>
    <scope>NUCLEOTIDE SEQUENCE [LARGE SCALE GENOMIC DNA]</scope>
    <source>
        <strain>cv. Columbia</strain>
    </source>
</reference>
<reference key="2">
    <citation type="journal article" date="2017" name="Plant J.">
        <title>Araport11: a complete reannotation of the Arabidopsis thaliana reference genome.</title>
        <authorList>
            <person name="Cheng C.Y."/>
            <person name="Krishnakumar V."/>
            <person name="Chan A.P."/>
            <person name="Thibaud-Nissen F."/>
            <person name="Schobel S."/>
            <person name="Town C.D."/>
        </authorList>
    </citation>
    <scope>GENOME REANNOTATION</scope>
    <source>
        <strain>cv. Columbia</strain>
    </source>
</reference>
<reference key="3">
    <citation type="journal article" date="2010" name="Plant Physiol.">
        <title>RTM3, which controls long-distance movement of potyviruses, is a member of a new plant gene family encoding a meprin and TRAF homology domain-containing protein.</title>
        <authorList>
            <person name="Cosson P."/>
            <person name="Sofer L."/>
            <person name="Le Q.H."/>
            <person name="Leger V."/>
            <person name="Schurdi-Levraud V."/>
            <person name="Whitham S.A."/>
            <person name="Yamamoto M.L."/>
            <person name="Gopalan S."/>
            <person name="Le Gall O."/>
            <person name="Candresse T."/>
            <person name="Carrington J.C."/>
            <person name="Revers F."/>
        </authorList>
    </citation>
    <scope>GENE FAMILY</scope>
</reference>
<sequence length="304" mass="35390">MENHEQTSFTFEIDNFLEKGDAISPIFISGGCEWFIRVWQIEDHLAVTLSVPNLESLRYGWERRTKYSFIVLNQSGRELERTFEVEGLFCTELLEWCHPKVMPTNKLQEVCLENNKLIIEVQVKVLEVVHEGGVTTEKEMFNIEGFDVLYTQVSRVSWLFVEHPNIAVDVRIKNQLVRTAYINVLLGLIETLDRSPRSLSETDLRDAHIELSELTEAGFKVDWLKKKLEEVSLARKNDISDGSQVEELEEHVKNLKLELDNEKIKSSTASERVLLLEKEVLDLKIELDRTRRGQPNLLYLKLRY</sequence>
<organism>
    <name type="scientific">Arabidopsis thaliana</name>
    <name type="common">Mouse-ear cress</name>
    <dbReference type="NCBI Taxonomy" id="3702"/>
    <lineage>
        <taxon>Eukaryota</taxon>
        <taxon>Viridiplantae</taxon>
        <taxon>Streptophyta</taxon>
        <taxon>Embryophyta</taxon>
        <taxon>Tracheophyta</taxon>
        <taxon>Spermatophyta</taxon>
        <taxon>Magnoliopsida</taxon>
        <taxon>eudicotyledons</taxon>
        <taxon>Gunneridae</taxon>
        <taxon>Pentapetalae</taxon>
        <taxon>rosids</taxon>
        <taxon>malvids</taxon>
        <taxon>Brassicales</taxon>
        <taxon>Brassicaceae</taxon>
        <taxon>Camelineae</taxon>
        <taxon>Arabidopsis</taxon>
    </lineage>
</organism>
<accession>P0DKG5</accession>
<accession>Q9SLB3</accession>
<proteinExistence type="predicted"/>
<evidence type="ECO:0000255" key="1"/>
<evidence type="ECO:0000255" key="2">
    <source>
        <dbReference type="PROSITE-ProRule" id="PRU00129"/>
    </source>
</evidence>
<evidence type="ECO:0000305" key="3"/>